<organism>
    <name type="scientific">Halorhodospira halophila (strain DSM 244 / SL1)</name>
    <name type="common">Ectothiorhodospira halophila (strain DSM 244 / SL1)</name>
    <dbReference type="NCBI Taxonomy" id="349124"/>
    <lineage>
        <taxon>Bacteria</taxon>
        <taxon>Pseudomonadati</taxon>
        <taxon>Pseudomonadota</taxon>
        <taxon>Gammaproteobacteria</taxon>
        <taxon>Chromatiales</taxon>
        <taxon>Ectothiorhodospiraceae</taxon>
        <taxon>Halorhodospira</taxon>
    </lineage>
</organism>
<reference key="1">
    <citation type="submission" date="2006-12" db="EMBL/GenBank/DDBJ databases">
        <title>Complete sequence of Halorhodospira halophila SL1.</title>
        <authorList>
            <consortium name="US DOE Joint Genome Institute"/>
            <person name="Copeland A."/>
            <person name="Lucas S."/>
            <person name="Lapidus A."/>
            <person name="Barry K."/>
            <person name="Detter J.C."/>
            <person name="Glavina del Rio T."/>
            <person name="Hammon N."/>
            <person name="Israni S."/>
            <person name="Dalin E."/>
            <person name="Tice H."/>
            <person name="Pitluck S."/>
            <person name="Saunders E."/>
            <person name="Brettin T."/>
            <person name="Bruce D."/>
            <person name="Han C."/>
            <person name="Tapia R."/>
            <person name="Schmutz J."/>
            <person name="Larimer F."/>
            <person name="Land M."/>
            <person name="Hauser L."/>
            <person name="Kyrpides N."/>
            <person name="Mikhailova N."/>
            <person name="Hoff W."/>
            <person name="Richardson P."/>
        </authorList>
    </citation>
    <scope>NUCLEOTIDE SEQUENCE [LARGE SCALE GENOMIC DNA]</scope>
    <source>
        <strain>DSM 244 / SL1</strain>
    </source>
</reference>
<sequence>MSDTQQSAPDIFNTGLVPMVVEQSARGERAYDIFSRLLKERVIFLVGPVEDYQANLLVAQLLFLESENPDKDVHLYINSPGGSVTAGLAIYDTMQFIKPDVATLCVGQAASMGALLLAAGAEGKRHALPNSRMMIHQPLGGFQGQATDIDIHAREILSMRDRLNTILAHHTGQDIETIRQDTDRDNFMAAEAAAQYGLIDRVLTSRGASE</sequence>
<comment type="function">
    <text evidence="1">Cleaves peptides in various proteins in a process that requires ATP hydrolysis. Has a chymotrypsin-like activity. Plays a major role in the degradation of misfolded proteins.</text>
</comment>
<comment type="catalytic activity">
    <reaction evidence="1">
        <text>Hydrolysis of proteins to small peptides in the presence of ATP and magnesium. alpha-casein is the usual test substrate. In the absence of ATP, only oligopeptides shorter than five residues are hydrolyzed (such as succinyl-Leu-Tyr-|-NHMec, and Leu-Tyr-Leu-|-Tyr-Trp, in which cleavage of the -Tyr-|-Leu- and -Tyr-|-Trp bonds also occurs).</text>
        <dbReference type="EC" id="3.4.21.92"/>
    </reaction>
</comment>
<comment type="subunit">
    <text evidence="1">Fourteen ClpP subunits assemble into 2 heptameric rings which stack back to back to give a disk-like structure with a central cavity, resembling the structure of eukaryotic proteasomes.</text>
</comment>
<comment type="subcellular location">
    <subcellularLocation>
        <location evidence="1">Cytoplasm</location>
    </subcellularLocation>
</comment>
<comment type="similarity">
    <text evidence="1">Belongs to the peptidase S14 family.</text>
</comment>
<proteinExistence type="inferred from homology"/>
<protein>
    <recommendedName>
        <fullName evidence="1">ATP-dependent Clp protease proteolytic subunit</fullName>
        <ecNumber evidence="1">3.4.21.92</ecNumber>
    </recommendedName>
    <alternativeName>
        <fullName evidence="1">Endopeptidase Clp</fullName>
    </alternativeName>
</protein>
<dbReference type="EC" id="3.4.21.92" evidence="1"/>
<dbReference type="EMBL" id="CP000544">
    <property type="protein sequence ID" value="ABM61389.1"/>
    <property type="molecule type" value="Genomic_DNA"/>
</dbReference>
<dbReference type="RefSeq" id="WP_011813412.1">
    <property type="nucleotide sequence ID" value="NC_008789.1"/>
</dbReference>
<dbReference type="SMR" id="A1WUM7"/>
<dbReference type="STRING" id="349124.Hhal_0603"/>
<dbReference type="MEROPS" id="S14.001"/>
<dbReference type="KEGG" id="hha:Hhal_0603"/>
<dbReference type="eggNOG" id="COG0740">
    <property type="taxonomic scope" value="Bacteria"/>
</dbReference>
<dbReference type="HOGENOM" id="CLU_058707_3_2_6"/>
<dbReference type="OrthoDB" id="9802800at2"/>
<dbReference type="Proteomes" id="UP000000647">
    <property type="component" value="Chromosome"/>
</dbReference>
<dbReference type="GO" id="GO:0005737">
    <property type="term" value="C:cytoplasm"/>
    <property type="evidence" value="ECO:0007669"/>
    <property type="project" value="UniProtKB-SubCell"/>
</dbReference>
<dbReference type="GO" id="GO:0009368">
    <property type="term" value="C:endopeptidase Clp complex"/>
    <property type="evidence" value="ECO:0007669"/>
    <property type="project" value="TreeGrafter"/>
</dbReference>
<dbReference type="GO" id="GO:0004176">
    <property type="term" value="F:ATP-dependent peptidase activity"/>
    <property type="evidence" value="ECO:0007669"/>
    <property type="project" value="InterPro"/>
</dbReference>
<dbReference type="GO" id="GO:0051117">
    <property type="term" value="F:ATPase binding"/>
    <property type="evidence" value="ECO:0007669"/>
    <property type="project" value="TreeGrafter"/>
</dbReference>
<dbReference type="GO" id="GO:0004252">
    <property type="term" value="F:serine-type endopeptidase activity"/>
    <property type="evidence" value="ECO:0007669"/>
    <property type="project" value="UniProtKB-UniRule"/>
</dbReference>
<dbReference type="GO" id="GO:0006515">
    <property type="term" value="P:protein quality control for misfolded or incompletely synthesized proteins"/>
    <property type="evidence" value="ECO:0007669"/>
    <property type="project" value="TreeGrafter"/>
</dbReference>
<dbReference type="CDD" id="cd07017">
    <property type="entry name" value="S14_ClpP_2"/>
    <property type="match status" value="1"/>
</dbReference>
<dbReference type="FunFam" id="3.90.226.10:FF:000001">
    <property type="entry name" value="ATP-dependent Clp protease proteolytic subunit"/>
    <property type="match status" value="1"/>
</dbReference>
<dbReference type="Gene3D" id="3.90.226.10">
    <property type="entry name" value="2-enoyl-CoA Hydratase, Chain A, domain 1"/>
    <property type="match status" value="1"/>
</dbReference>
<dbReference type="HAMAP" id="MF_00444">
    <property type="entry name" value="ClpP"/>
    <property type="match status" value="1"/>
</dbReference>
<dbReference type="InterPro" id="IPR001907">
    <property type="entry name" value="ClpP"/>
</dbReference>
<dbReference type="InterPro" id="IPR029045">
    <property type="entry name" value="ClpP/crotonase-like_dom_sf"/>
</dbReference>
<dbReference type="InterPro" id="IPR023562">
    <property type="entry name" value="ClpP/TepA"/>
</dbReference>
<dbReference type="InterPro" id="IPR033135">
    <property type="entry name" value="ClpP_His_AS"/>
</dbReference>
<dbReference type="InterPro" id="IPR018215">
    <property type="entry name" value="ClpP_Ser_AS"/>
</dbReference>
<dbReference type="NCBIfam" id="TIGR00493">
    <property type="entry name" value="clpP"/>
    <property type="match status" value="1"/>
</dbReference>
<dbReference type="NCBIfam" id="NF001368">
    <property type="entry name" value="PRK00277.1"/>
    <property type="match status" value="1"/>
</dbReference>
<dbReference type="NCBIfam" id="NF009205">
    <property type="entry name" value="PRK12553.1"/>
    <property type="match status" value="1"/>
</dbReference>
<dbReference type="PANTHER" id="PTHR10381">
    <property type="entry name" value="ATP-DEPENDENT CLP PROTEASE PROTEOLYTIC SUBUNIT"/>
    <property type="match status" value="1"/>
</dbReference>
<dbReference type="PANTHER" id="PTHR10381:SF70">
    <property type="entry name" value="ATP-DEPENDENT CLP PROTEASE PROTEOLYTIC SUBUNIT"/>
    <property type="match status" value="1"/>
</dbReference>
<dbReference type="Pfam" id="PF00574">
    <property type="entry name" value="CLP_protease"/>
    <property type="match status" value="1"/>
</dbReference>
<dbReference type="PRINTS" id="PR00127">
    <property type="entry name" value="CLPPROTEASEP"/>
</dbReference>
<dbReference type="SUPFAM" id="SSF52096">
    <property type="entry name" value="ClpP/crotonase"/>
    <property type="match status" value="1"/>
</dbReference>
<dbReference type="PROSITE" id="PS00382">
    <property type="entry name" value="CLP_PROTEASE_HIS"/>
    <property type="match status" value="1"/>
</dbReference>
<dbReference type="PROSITE" id="PS00381">
    <property type="entry name" value="CLP_PROTEASE_SER"/>
    <property type="match status" value="1"/>
</dbReference>
<gene>
    <name evidence="1" type="primary">clpP</name>
    <name type="ordered locus">Hhal_0603</name>
</gene>
<evidence type="ECO:0000255" key="1">
    <source>
        <dbReference type="HAMAP-Rule" id="MF_00444"/>
    </source>
</evidence>
<feature type="chain" id="PRO_1000189646" description="ATP-dependent Clp protease proteolytic subunit">
    <location>
        <begin position="1"/>
        <end position="210"/>
    </location>
</feature>
<feature type="active site" description="Nucleophile" evidence="1">
    <location>
        <position position="111"/>
    </location>
</feature>
<feature type="active site" evidence="1">
    <location>
        <position position="136"/>
    </location>
</feature>
<keyword id="KW-0963">Cytoplasm</keyword>
<keyword id="KW-0378">Hydrolase</keyword>
<keyword id="KW-0645">Protease</keyword>
<keyword id="KW-1185">Reference proteome</keyword>
<keyword id="KW-0720">Serine protease</keyword>
<accession>A1WUM7</accession>
<name>CLPP_HALHL</name>